<name>RIHA_SHEON</name>
<keyword id="KW-0326">Glycosidase</keyword>
<keyword id="KW-0378">Hydrolase</keyword>
<keyword id="KW-1185">Reference proteome</keyword>
<sequence length="318" mass="34347">MTCPIILDCDPGHDDAIALILALAHPDLVPLAVTTSAGNQTPDKTLNNALRILTLLNRSDIPVAGGAAKPLARDLIIADNVHGETGLDGPALPNPSFSPQAITAVELMAQQIRKSHQPVTLIPTGPLTNIALLLASHSELHDKIERIVLMGGAAGVGNWTPAAEFNIFVDPEAADIVFKSGIPITMCGLDVTHQAQIMDEDIERIRAIPNPVAKCVAELLDFFMIYHRDPKWGFVGAPLHDPCTIAWLLKPELFDAQDCWVGIETQSELTLGMTVVDRYQLTGKPANATVLFGLNRQGFVDLLVHSLAAYTPTYLNRR</sequence>
<dbReference type="EC" id="3.2.-.-" evidence="1"/>
<dbReference type="EMBL" id="AE014299">
    <property type="protein sequence ID" value="AAN53887.1"/>
    <property type="molecule type" value="Genomic_DNA"/>
</dbReference>
<dbReference type="RefSeq" id="NP_716442.1">
    <property type="nucleotide sequence ID" value="NC_004347.2"/>
</dbReference>
<dbReference type="RefSeq" id="WP_011071106.1">
    <property type="nucleotide sequence ID" value="NC_004347.2"/>
</dbReference>
<dbReference type="SMR" id="Q8EIM7"/>
<dbReference type="STRING" id="211586.SO_0811"/>
<dbReference type="PaxDb" id="211586-SO_0811"/>
<dbReference type="KEGG" id="son:SO_0811"/>
<dbReference type="PATRIC" id="fig|211586.12.peg.778"/>
<dbReference type="eggNOG" id="COG1957">
    <property type="taxonomic scope" value="Bacteria"/>
</dbReference>
<dbReference type="HOGENOM" id="CLU_036838_2_0_6"/>
<dbReference type="OrthoDB" id="9797882at2"/>
<dbReference type="PhylomeDB" id="Q8EIM7"/>
<dbReference type="BioCyc" id="SONE211586:G1GMP-758-MONOMER"/>
<dbReference type="Proteomes" id="UP000008186">
    <property type="component" value="Chromosome"/>
</dbReference>
<dbReference type="GO" id="GO:0005829">
    <property type="term" value="C:cytosol"/>
    <property type="evidence" value="ECO:0000318"/>
    <property type="project" value="GO_Central"/>
</dbReference>
<dbReference type="GO" id="GO:0008477">
    <property type="term" value="F:purine nucleosidase activity"/>
    <property type="evidence" value="ECO:0000318"/>
    <property type="project" value="GO_Central"/>
</dbReference>
<dbReference type="GO" id="GO:0045437">
    <property type="term" value="F:uridine nucleosidase activity"/>
    <property type="evidence" value="ECO:0007669"/>
    <property type="project" value="InterPro"/>
</dbReference>
<dbReference type="GO" id="GO:0015949">
    <property type="term" value="P:nucleobase-containing small molecule interconversion"/>
    <property type="evidence" value="ECO:0007669"/>
    <property type="project" value="InterPro"/>
</dbReference>
<dbReference type="GO" id="GO:0006152">
    <property type="term" value="P:purine nucleoside catabolic process"/>
    <property type="evidence" value="ECO:0000318"/>
    <property type="project" value="GO_Central"/>
</dbReference>
<dbReference type="GO" id="GO:0006206">
    <property type="term" value="P:pyrimidine nucleobase metabolic process"/>
    <property type="evidence" value="ECO:0007669"/>
    <property type="project" value="UniProtKB-UniRule"/>
</dbReference>
<dbReference type="CDD" id="cd02651">
    <property type="entry name" value="nuc_hydro_IU_UC_XIUA"/>
    <property type="match status" value="1"/>
</dbReference>
<dbReference type="FunFam" id="3.90.245.10:FF:000001">
    <property type="entry name" value="Pyrimidine-specific ribonucleoside hydrolase RihA"/>
    <property type="match status" value="1"/>
</dbReference>
<dbReference type="Gene3D" id="3.90.245.10">
    <property type="entry name" value="Ribonucleoside hydrolase-like"/>
    <property type="match status" value="1"/>
</dbReference>
<dbReference type="HAMAP" id="MF_01431">
    <property type="entry name" value="Pyrim_hydro_RihA"/>
    <property type="match status" value="1"/>
</dbReference>
<dbReference type="InterPro" id="IPR015910">
    <property type="entry name" value="I/U_nuclsd_hydro_CS"/>
</dbReference>
<dbReference type="InterPro" id="IPR001910">
    <property type="entry name" value="Inosine/uridine_hydrolase_dom"/>
</dbReference>
<dbReference type="InterPro" id="IPR023186">
    <property type="entry name" value="IUNH"/>
</dbReference>
<dbReference type="InterPro" id="IPR022975">
    <property type="entry name" value="Pyrim_hydro_RihA"/>
</dbReference>
<dbReference type="InterPro" id="IPR036452">
    <property type="entry name" value="Ribo_hydro-like"/>
</dbReference>
<dbReference type="NCBIfam" id="NF007761">
    <property type="entry name" value="PRK10443.1"/>
    <property type="match status" value="1"/>
</dbReference>
<dbReference type="PANTHER" id="PTHR12304">
    <property type="entry name" value="INOSINE-URIDINE PREFERRING NUCLEOSIDE HYDROLASE"/>
    <property type="match status" value="1"/>
</dbReference>
<dbReference type="PANTHER" id="PTHR12304:SF4">
    <property type="entry name" value="URIDINE NUCLEOSIDASE"/>
    <property type="match status" value="1"/>
</dbReference>
<dbReference type="Pfam" id="PF01156">
    <property type="entry name" value="IU_nuc_hydro"/>
    <property type="match status" value="1"/>
</dbReference>
<dbReference type="SUPFAM" id="SSF53590">
    <property type="entry name" value="Nucleoside hydrolase"/>
    <property type="match status" value="1"/>
</dbReference>
<dbReference type="PROSITE" id="PS01247">
    <property type="entry name" value="IUNH"/>
    <property type="match status" value="1"/>
</dbReference>
<protein>
    <recommendedName>
        <fullName evidence="1">Pyrimidine-specific ribonucleoside hydrolase RihA</fullName>
        <ecNumber evidence="1">3.2.-.-</ecNumber>
    </recommendedName>
    <alternativeName>
        <fullName evidence="1">Cytidine/uridine-specific hydrolase</fullName>
    </alternativeName>
</protein>
<accession>Q8EIM7</accession>
<feature type="chain" id="PRO_0000206821" description="Pyrimidine-specific ribonucleoside hydrolase RihA">
    <location>
        <begin position="1"/>
        <end position="318"/>
    </location>
</feature>
<feature type="active site" evidence="1">
    <location>
        <position position="240"/>
    </location>
</feature>
<evidence type="ECO:0000255" key="1">
    <source>
        <dbReference type="HAMAP-Rule" id="MF_01431"/>
    </source>
</evidence>
<comment type="function">
    <text evidence="1">Hydrolyzes cytidine or uridine to ribose and cytosine or uracil, respectively.</text>
</comment>
<comment type="similarity">
    <text evidence="1">Belongs to the IUNH family. RihA subfamily.</text>
</comment>
<reference key="1">
    <citation type="journal article" date="2002" name="Nat. Biotechnol.">
        <title>Genome sequence of the dissimilatory metal ion-reducing bacterium Shewanella oneidensis.</title>
        <authorList>
            <person name="Heidelberg J.F."/>
            <person name="Paulsen I.T."/>
            <person name="Nelson K.E."/>
            <person name="Gaidos E.J."/>
            <person name="Nelson W.C."/>
            <person name="Read T.D."/>
            <person name="Eisen J.A."/>
            <person name="Seshadri R."/>
            <person name="Ward N.L."/>
            <person name="Methe B.A."/>
            <person name="Clayton R.A."/>
            <person name="Meyer T."/>
            <person name="Tsapin A."/>
            <person name="Scott J."/>
            <person name="Beanan M.J."/>
            <person name="Brinkac L.M."/>
            <person name="Daugherty S.C."/>
            <person name="DeBoy R.T."/>
            <person name="Dodson R.J."/>
            <person name="Durkin A.S."/>
            <person name="Haft D.H."/>
            <person name="Kolonay J.F."/>
            <person name="Madupu R."/>
            <person name="Peterson J.D."/>
            <person name="Umayam L.A."/>
            <person name="White O."/>
            <person name="Wolf A.M."/>
            <person name="Vamathevan J.J."/>
            <person name="Weidman J.F."/>
            <person name="Impraim M."/>
            <person name="Lee K."/>
            <person name="Berry K.J."/>
            <person name="Lee C."/>
            <person name="Mueller J."/>
            <person name="Khouri H.M."/>
            <person name="Gill J."/>
            <person name="Utterback T.R."/>
            <person name="McDonald L.A."/>
            <person name="Feldblyum T.V."/>
            <person name="Smith H.O."/>
            <person name="Venter J.C."/>
            <person name="Nealson K.H."/>
            <person name="Fraser C.M."/>
        </authorList>
    </citation>
    <scope>NUCLEOTIDE SEQUENCE [LARGE SCALE GENOMIC DNA]</scope>
    <source>
        <strain>ATCC 700550 / JCM 31522 / CIP 106686 / LMG 19005 / NCIMB 14063 / MR-1</strain>
    </source>
</reference>
<gene>
    <name evidence="1" type="primary">rihA</name>
    <name type="ordered locus">SO_0811</name>
</gene>
<proteinExistence type="inferred from homology"/>
<organism>
    <name type="scientific">Shewanella oneidensis (strain ATCC 700550 / JCM 31522 / CIP 106686 / LMG 19005 / NCIMB 14063 / MR-1)</name>
    <dbReference type="NCBI Taxonomy" id="211586"/>
    <lineage>
        <taxon>Bacteria</taxon>
        <taxon>Pseudomonadati</taxon>
        <taxon>Pseudomonadota</taxon>
        <taxon>Gammaproteobacteria</taxon>
        <taxon>Alteromonadales</taxon>
        <taxon>Shewanellaceae</taxon>
        <taxon>Shewanella</taxon>
    </lineage>
</organism>